<organism>
    <name type="scientific">Streptococcus pyogenes serotype M49 (strain NZ131)</name>
    <dbReference type="NCBI Taxonomy" id="471876"/>
    <lineage>
        <taxon>Bacteria</taxon>
        <taxon>Bacillati</taxon>
        <taxon>Bacillota</taxon>
        <taxon>Bacilli</taxon>
        <taxon>Lactobacillales</taxon>
        <taxon>Streptococcaceae</taxon>
        <taxon>Streptococcus</taxon>
    </lineage>
</organism>
<dbReference type="EC" id="3.1.26.4" evidence="1"/>
<dbReference type="EMBL" id="CP000829">
    <property type="protein sequence ID" value="ACI61711.1"/>
    <property type="molecule type" value="Genomic_DNA"/>
</dbReference>
<dbReference type="SMR" id="B5XI49"/>
<dbReference type="KEGG" id="soz:Spy49_1437"/>
<dbReference type="HOGENOM" id="CLU_059546_1_0_9"/>
<dbReference type="Proteomes" id="UP000001039">
    <property type="component" value="Chromosome"/>
</dbReference>
<dbReference type="GO" id="GO:0005737">
    <property type="term" value="C:cytoplasm"/>
    <property type="evidence" value="ECO:0007669"/>
    <property type="project" value="UniProtKB-SubCell"/>
</dbReference>
<dbReference type="GO" id="GO:0032299">
    <property type="term" value="C:ribonuclease H2 complex"/>
    <property type="evidence" value="ECO:0007669"/>
    <property type="project" value="TreeGrafter"/>
</dbReference>
<dbReference type="GO" id="GO:0000287">
    <property type="term" value="F:magnesium ion binding"/>
    <property type="evidence" value="ECO:0007669"/>
    <property type="project" value="UniProtKB-UniRule"/>
</dbReference>
<dbReference type="GO" id="GO:0003723">
    <property type="term" value="F:RNA binding"/>
    <property type="evidence" value="ECO:0007669"/>
    <property type="project" value="InterPro"/>
</dbReference>
<dbReference type="GO" id="GO:0004523">
    <property type="term" value="F:RNA-DNA hybrid ribonuclease activity"/>
    <property type="evidence" value="ECO:0007669"/>
    <property type="project" value="UniProtKB-UniRule"/>
</dbReference>
<dbReference type="GO" id="GO:0043137">
    <property type="term" value="P:DNA replication, removal of RNA primer"/>
    <property type="evidence" value="ECO:0007669"/>
    <property type="project" value="TreeGrafter"/>
</dbReference>
<dbReference type="GO" id="GO:0006298">
    <property type="term" value="P:mismatch repair"/>
    <property type="evidence" value="ECO:0007669"/>
    <property type="project" value="TreeGrafter"/>
</dbReference>
<dbReference type="CDD" id="cd06590">
    <property type="entry name" value="RNase_HII_bacteria_HIII_like"/>
    <property type="match status" value="1"/>
</dbReference>
<dbReference type="CDD" id="cd14796">
    <property type="entry name" value="RNAse_HIII_N"/>
    <property type="match status" value="1"/>
</dbReference>
<dbReference type="FunFam" id="3.30.420.10:FF:000047">
    <property type="entry name" value="Ribonuclease HIII"/>
    <property type="match status" value="1"/>
</dbReference>
<dbReference type="Gene3D" id="3.30.420.10">
    <property type="entry name" value="Ribonuclease H-like superfamily/Ribonuclease H"/>
    <property type="match status" value="1"/>
</dbReference>
<dbReference type="Gene3D" id="3.30.310.10">
    <property type="entry name" value="TATA-Binding Protein"/>
    <property type="match status" value="1"/>
</dbReference>
<dbReference type="HAMAP" id="MF_00053">
    <property type="entry name" value="RNase_HIII"/>
    <property type="match status" value="1"/>
</dbReference>
<dbReference type="InterPro" id="IPR001352">
    <property type="entry name" value="RNase_HII/HIII"/>
</dbReference>
<dbReference type="InterPro" id="IPR024567">
    <property type="entry name" value="RNase_HII/HIII_dom"/>
</dbReference>
<dbReference type="InterPro" id="IPR004641">
    <property type="entry name" value="RNase_HIII"/>
</dbReference>
<dbReference type="InterPro" id="IPR024568">
    <property type="entry name" value="RNase_HIII_N"/>
</dbReference>
<dbReference type="InterPro" id="IPR012337">
    <property type="entry name" value="RNaseH-like_sf"/>
</dbReference>
<dbReference type="InterPro" id="IPR036397">
    <property type="entry name" value="RNaseH_sf"/>
</dbReference>
<dbReference type="InterPro" id="IPR012295">
    <property type="entry name" value="TBP_dom_sf"/>
</dbReference>
<dbReference type="NCBIfam" id="TIGR00716">
    <property type="entry name" value="rnhC"/>
    <property type="match status" value="1"/>
</dbReference>
<dbReference type="PANTHER" id="PTHR10954:SF23">
    <property type="entry name" value="RIBONUCLEASE"/>
    <property type="match status" value="1"/>
</dbReference>
<dbReference type="PANTHER" id="PTHR10954">
    <property type="entry name" value="RIBONUCLEASE H2 SUBUNIT A"/>
    <property type="match status" value="1"/>
</dbReference>
<dbReference type="Pfam" id="PF11858">
    <property type="entry name" value="DUF3378"/>
    <property type="match status" value="1"/>
</dbReference>
<dbReference type="Pfam" id="PF01351">
    <property type="entry name" value="RNase_HII"/>
    <property type="match status" value="1"/>
</dbReference>
<dbReference type="PIRSF" id="PIRSF037748">
    <property type="entry name" value="RnhC"/>
    <property type="match status" value="1"/>
</dbReference>
<dbReference type="SUPFAM" id="SSF53098">
    <property type="entry name" value="Ribonuclease H-like"/>
    <property type="match status" value="1"/>
</dbReference>
<dbReference type="PROSITE" id="PS51975">
    <property type="entry name" value="RNASE_H_2"/>
    <property type="match status" value="1"/>
</dbReference>
<name>RNH3_STRPZ</name>
<keyword id="KW-0963">Cytoplasm</keyword>
<keyword id="KW-0255">Endonuclease</keyword>
<keyword id="KW-0378">Hydrolase</keyword>
<keyword id="KW-0460">Magnesium</keyword>
<keyword id="KW-0479">Metal-binding</keyword>
<keyword id="KW-0540">Nuclease</keyword>
<feature type="chain" id="PRO_1000091683" description="Ribonuclease HIII">
    <location>
        <begin position="1"/>
        <end position="300"/>
    </location>
</feature>
<feature type="domain" description="RNase H type-2" evidence="2">
    <location>
        <begin position="83"/>
        <end position="300"/>
    </location>
</feature>
<feature type="binding site" evidence="1">
    <location>
        <position position="89"/>
    </location>
    <ligand>
        <name>a divalent metal cation</name>
        <dbReference type="ChEBI" id="CHEBI:60240"/>
    </ligand>
</feature>
<feature type="binding site" evidence="1">
    <location>
        <position position="90"/>
    </location>
    <ligand>
        <name>a divalent metal cation</name>
        <dbReference type="ChEBI" id="CHEBI:60240"/>
    </ligand>
</feature>
<feature type="binding site" evidence="1">
    <location>
        <position position="194"/>
    </location>
    <ligand>
        <name>a divalent metal cation</name>
        <dbReference type="ChEBI" id="CHEBI:60240"/>
    </ligand>
</feature>
<accession>B5XI49</accession>
<protein>
    <recommendedName>
        <fullName evidence="1">Ribonuclease HIII</fullName>
        <shortName evidence="1">RNase HIII</shortName>
        <ecNumber evidence="1">3.1.26.4</ecNumber>
    </recommendedName>
</protein>
<gene>
    <name evidence="1" type="primary">rnhC</name>
    <name type="ordered locus">Spy49_1437</name>
</gene>
<reference key="1">
    <citation type="journal article" date="2008" name="J. Bacteriol.">
        <title>Genome sequence of a nephritogenic and highly transformable M49 strain of Streptococcus pyogenes.</title>
        <authorList>
            <person name="McShan W.M."/>
            <person name="Ferretti J.J."/>
            <person name="Karasawa T."/>
            <person name="Suvorov A.N."/>
            <person name="Lin S."/>
            <person name="Qin B."/>
            <person name="Jia H."/>
            <person name="Kenton S."/>
            <person name="Najar F."/>
            <person name="Wu H."/>
            <person name="Scott J."/>
            <person name="Roe B.A."/>
            <person name="Savic D.J."/>
        </authorList>
    </citation>
    <scope>NUCLEOTIDE SEQUENCE [LARGE SCALE GENOMIC DNA]</scope>
    <source>
        <strain>NZ131</strain>
    </source>
</reference>
<evidence type="ECO:0000255" key="1">
    <source>
        <dbReference type="HAMAP-Rule" id="MF_00053"/>
    </source>
</evidence>
<evidence type="ECO:0000255" key="2">
    <source>
        <dbReference type="PROSITE-ProRule" id="PRU01319"/>
    </source>
</evidence>
<comment type="function">
    <text evidence="1">Endonuclease that specifically degrades the RNA of RNA-DNA hybrids.</text>
</comment>
<comment type="catalytic activity">
    <reaction evidence="1">
        <text>Endonucleolytic cleavage to 5'-phosphomonoester.</text>
        <dbReference type="EC" id="3.1.26.4"/>
    </reaction>
</comment>
<comment type="cofactor">
    <cofactor evidence="1">
        <name>Mn(2+)</name>
        <dbReference type="ChEBI" id="CHEBI:29035"/>
    </cofactor>
    <cofactor evidence="1">
        <name>Mg(2+)</name>
        <dbReference type="ChEBI" id="CHEBI:18420"/>
    </cofactor>
    <text evidence="1">Manganese or magnesium. Binds 1 divalent metal ion per monomer in the absence of substrate. May bind a second metal ion after substrate binding.</text>
</comment>
<comment type="subcellular location">
    <subcellularLocation>
        <location evidence="1">Cytoplasm</location>
    </subcellularLocation>
</comment>
<comment type="similarity">
    <text evidence="1">Belongs to the RNase HII family. RnhC subfamily.</text>
</comment>
<sequence length="300" mass="32631">MNTLVLKIDAVLSKHLKKQLASYTISSQNTYVAFAAKKNGVTVLLYKSGKLVLQGNGANALAQELNLPVAKTVFEASNNSQDIPIIGSDEVGNGSYFGGIAVVASFVDPKDHSFLKKLGVDDSKKLSDKTIQQIAPLLEKQIPHQSLLLSPKKYNELVGKSKPYNAISIKVALHNQAIFLLLQKGIQPKQIVIDAFTSQSNYEKHLKKEKNHFPNPLTFQEKAESHYLAVAVSSIIARNLFLDNLDQLGQDLGYQLPSGAGSASDKVASQLLAAYGMSSLEYSAKLHFANTHKAQALLTK</sequence>
<proteinExistence type="inferred from homology"/>